<keyword id="KW-0046">Antibiotic resistance</keyword>
<keyword id="KW-1003">Cell membrane</keyword>
<keyword id="KW-0133">Cell shape</keyword>
<keyword id="KW-0961">Cell wall biogenesis/degradation</keyword>
<keyword id="KW-0378">Hydrolase</keyword>
<keyword id="KW-0472">Membrane</keyword>
<keyword id="KW-0573">Peptidoglycan synthesis</keyword>
<keyword id="KW-0812">Transmembrane</keyword>
<keyword id="KW-1133">Transmembrane helix</keyword>
<protein>
    <recommendedName>
        <fullName evidence="1">Undecaprenyl-diphosphatase</fullName>
        <ecNumber evidence="1">3.6.1.27</ecNumber>
    </recommendedName>
    <alternativeName>
        <fullName evidence="1">Bacitracin resistance protein</fullName>
    </alternativeName>
    <alternativeName>
        <fullName evidence="1">Undecaprenyl pyrophosphate phosphatase</fullName>
    </alternativeName>
</protein>
<accession>C0MG10</accession>
<evidence type="ECO:0000255" key="1">
    <source>
        <dbReference type="HAMAP-Rule" id="MF_01006"/>
    </source>
</evidence>
<feature type="chain" id="PRO_1000213156" description="Undecaprenyl-diphosphatase">
    <location>
        <begin position="1"/>
        <end position="279"/>
    </location>
</feature>
<feature type="transmembrane region" description="Helical" evidence="1">
    <location>
        <begin position="2"/>
        <end position="22"/>
    </location>
</feature>
<feature type="transmembrane region" description="Helical" evidence="1">
    <location>
        <begin position="44"/>
        <end position="64"/>
    </location>
</feature>
<feature type="transmembrane region" description="Helical" evidence="1">
    <location>
        <begin position="85"/>
        <end position="105"/>
    </location>
</feature>
<feature type="transmembrane region" description="Helical" evidence="1">
    <location>
        <begin position="113"/>
        <end position="133"/>
    </location>
</feature>
<feature type="transmembrane region" description="Helical" evidence="1">
    <location>
        <begin position="163"/>
        <end position="183"/>
    </location>
</feature>
<feature type="transmembrane region" description="Helical" evidence="1">
    <location>
        <begin position="188"/>
        <end position="208"/>
    </location>
</feature>
<feature type="transmembrane region" description="Helical" evidence="1">
    <location>
        <begin position="225"/>
        <end position="245"/>
    </location>
</feature>
<feature type="transmembrane region" description="Helical" evidence="1">
    <location>
        <begin position="255"/>
        <end position="275"/>
    </location>
</feature>
<organism>
    <name type="scientific">Streptococcus equi subsp. zooepidemicus (strain H70)</name>
    <dbReference type="NCBI Taxonomy" id="553483"/>
    <lineage>
        <taxon>Bacteria</taxon>
        <taxon>Bacillati</taxon>
        <taxon>Bacillota</taxon>
        <taxon>Bacilli</taxon>
        <taxon>Lactobacillales</taxon>
        <taxon>Streptococcaceae</taxon>
        <taxon>Streptococcus</taxon>
    </lineage>
</organism>
<name>UPPP_STRS7</name>
<dbReference type="EC" id="3.6.1.27" evidence="1"/>
<dbReference type="EMBL" id="FM204884">
    <property type="protein sequence ID" value="CAW98038.1"/>
    <property type="molecule type" value="Genomic_DNA"/>
</dbReference>
<dbReference type="SMR" id="C0MG10"/>
<dbReference type="KEGG" id="seq:SZO_02660"/>
<dbReference type="eggNOG" id="COG1968">
    <property type="taxonomic scope" value="Bacteria"/>
</dbReference>
<dbReference type="HOGENOM" id="CLU_060296_2_0_9"/>
<dbReference type="Proteomes" id="UP000001368">
    <property type="component" value="Chromosome"/>
</dbReference>
<dbReference type="GO" id="GO:0005886">
    <property type="term" value="C:plasma membrane"/>
    <property type="evidence" value="ECO:0007669"/>
    <property type="project" value="UniProtKB-SubCell"/>
</dbReference>
<dbReference type="GO" id="GO:0050380">
    <property type="term" value="F:undecaprenyl-diphosphatase activity"/>
    <property type="evidence" value="ECO:0007669"/>
    <property type="project" value="UniProtKB-UniRule"/>
</dbReference>
<dbReference type="GO" id="GO:0071555">
    <property type="term" value="P:cell wall organization"/>
    <property type="evidence" value="ECO:0007669"/>
    <property type="project" value="UniProtKB-KW"/>
</dbReference>
<dbReference type="GO" id="GO:0009252">
    <property type="term" value="P:peptidoglycan biosynthetic process"/>
    <property type="evidence" value="ECO:0007669"/>
    <property type="project" value="UniProtKB-KW"/>
</dbReference>
<dbReference type="GO" id="GO:0008360">
    <property type="term" value="P:regulation of cell shape"/>
    <property type="evidence" value="ECO:0007669"/>
    <property type="project" value="UniProtKB-KW"/>
</dbReference>
<dbReference type="GO" id="GO:0046677">
    <property type="term" value="P:response to antibiotic"/>
    <property type="evidence" value="ECO:0007669"/>
    <property type="project" value="UniProtKB-UniRule"/>
</dbReference>
<dbReference type="HAMAP" id="MF_01006">
    <property type="entry name" value="Undec_diphosphatase"/>
    <property type="match status" value="1"/>
</dbReference>
<dbReference type="InterPro" id="IPR003824">
    <property type="entry name" value="UppP"/>
</dbReference>
<dbReference type="NCBIfam" id="NF001391">
    <property type="entry name" value="PRK00281.1-5"/>
    <property type="match status" value="1"/>
</dbReference>
<dbReference type="PANTHER" id="PTHR30622">
    <property type="entry name" value="UNDECAPRENYL-DIPHOSPHATASE"/>
    <property type="match status" value="1"/>
</dbReference>
<dbReference type="PANTHER" id="PTHR30622:SF3">
    <property type="entry name" value="UNDECAPRENYL-DIPHOSPHATASE"/>
    <property type="match status" value="1"/>
</dbReference>
<dbReference type="Pfam" id="PF02673">
    <property type="entry name" value="BacA"/>
    <property type="match status" value="1"/>
</dbReference>
<reference key="1">
    <citation type="journal article" date="2009" name="PLoS Pathog.">
        <title>Genomic evidence for the evolution of Streptococcus equi: host restriction, increased virulence, and genetic exchange with human pathogens.</title>
        <authorList>
            <person name="Holden M.T.G."/>
            <person name="Heather Z."/>
            <person name="Paillot R."/>
            <person name="Steward K.F."/>
            <person name="Webb K."/>
            <person name="Ainslie F."/>
            <person name="Jourdan T."/>
            <person name="Bason N.C."/>
            <person name="Holroyd N.E."/>
            <person name="Mungall K."/>
            <person name="Quail M.A."/>
            <person name="Sanders M."/>
            <person name="Simmonds M."/>
            <person name="Willey D."/>
            <person name="Brooks K."/>
            <person name="Aanensen D.M."/>
            <person name="Spratt B.G."/>
            <person name="Jolley K.A."/>
            <person name="Maiden M.C.J."/>
            <person name="Kehoe M."/>
            <person name="Chanter N."/>
            <person name="Bentley S.D."/>
            <person name="Robinson C."/>
            <person name="Maskell D.J."/>
            <person name="Parkhill J."/>
            <person name="Waller A.S."/>
        </authorList>
    </citation>
    <scope>NUCLEOTIDE SEQUENCE [LARGE SCALE GENOMIC DNA]</scope>
    <source>
        <strain>H70</strain>
    </source>
</reference>
<gene>
    <name evidence="1" type="primary">uppP</name>
    <name type="ordered locus">SZO_02660</name>
</gene>
<sequence length="279" mass="31479">MLFIELLKAIFFGVIEGVTEWLPISSTGHLILVQEFIRLHQDKAFMEMFNIVIQLGAIIAVIVIYFERLNPFQPGKSPQQIRLTWQLWLKVAIACIPSIIIAVPLDDWFEAHFNHMLPIAIALIVYGVAFLWIEKRHQTLEPRVVKLSRMSYKTAFFIGCFQVLSIIPGTSRSGATILGAIILGASRTVAADFTFFLAIPTMFGYSGLKALKFFIDGNHLTLSQLLVLLVASLTAFAVSLYVIKLLTDYVKKHDFTVFGRYRIVLGSLLIVYSVFKSLF</sequence>
<proteinExistence type="inferred from homology"/>
<comment type="function">
    <text evidence="1">Catalyzes the dephosphorylation of undecaprenyl diphosphate (UPP). Confers resistance to bacitracin.</text>
</comment>
<comment type="catalytic activity">
    <reaction evidence="1">
        <text>di-trans,octa-cis-undecaprenyl diphosphate + H2O = di-trans,octa-cis-undecaprenyl phosphate + phosphate + H(+)</text>
        <dbReference type="Rhea" id="RHEA:28094"/>
        <dbReference type="ChEBI" id="CHEBI:15377"/>
        <dbReference type="ChEBI" id="CHEBI:15378"/>
        <dbReference type="ChEBI" id="CHEBI:43474"/>
        <dbReference type="ChEBI" id="CHEBI:58405"/>
        <dbReference type="ChEBI" id="CHEBI:60392"/>
        <dbReference type="EC" id="3.6.1.27"/>
    </reaction>
</comment>
<comment type="subcellular location">
    <subcellularLocation>
        <location evidence="1">Cell membrane</location>
        <topology evidence="1">Multi-pass membrane protein</topology>
    </subcellularLocation>
</comment>
<comment type="miscellaneous">
    <text>Bacitracin is thought to be involved in the inhibition of peptidoglycan synthesis by sequestering undecaprenyl diphosphate, thereby reducing the pool of lipid carrier available.</text>
</comment>
<comment type="similarity">
    <text evidence="1">Belongs to the UppP family.</text>
</comment>